<proteinExistence type="inferred from homology"/>
<gene>
    <name evidence="1" type="primary">rnz</name>
    <name type="ordered locus">Mmcs_3506</name>
</gene>
<feature type="chain" id="PRO_1000070305" description="Ribonuclease Z">
    <location>
        <begin position="1"/>
        <end position="285"/>
    </location>
</feature>
<feature type="active site" description="Proton acceptor" evidence="1">
    <location>
        <position position="65"/>
    </location>
</feature>
<feature type="binding site" evidence="1">
    <location>
        <position position="61"/>
    </location>
    <ligand>
        <name>Zn(2+)</name>
        <dbReference type="ChEBI" id="CHEBI:29105"/>
        <label>1</label>
        <note>catalytic</note>
    </ligand>
</feature>
<feature type="binding site" evidence="1">
    <location>
        <position position="63"/>
    </location>
    <ligand>
        <name>Zn(2+)</name>
        <dbReference type="ChEBI" id="CHEBI:29105"/>
        <label>1</label>
        <note>catalytic</note>
    </ligand>
</feature>
<feature type="binding site" evidence="1">
    <location>
        <position position="65"/>
    </location>
    <ligand>
        <name>Zn(2+)</name>
        <dbReference type="ChEBI" id="CHEBI:29105"/>
        <label>2</label>
        <note>catalytic</note>
    </ligand>
</feature>
<feature type="binding site" evidence="1">
    <location>
        <position position="66"/>
    </location>
    <ligand>
        <name>Zn(2+)</name>
        <dbReference type="ChEBI" id="CHEBI:29105"/>
        <label>2</label>
        <note>catalytic</note>
    </ligand>
</feature>
<feature type="binding site" evidence="1">
    <location>
        <position position="152"/>
    </location>
    <ligand>
        <name>Zn(2+)</name>
        <dbReference type="ChEBI" id="CHEBI:29105"/>
        <label>1</label>
        <note>catalytic</note>
    </ligand>
</feature>
<feature type="binding site" evidence="1">
    <location>
        <position position="175"/>
    </location>
    <ligand>
        <name>Zn(2+)</name>
        <dbReference type="ChEBI" id="CHEBI:29105"/>
        <label>1</label>
        <note>catalytic</note>
    </ligand>
</feature>
<feature type="binding site" evidence="1">
    <location>
        <position position="175"/>
    </location>
    <ligand>
        <name>Zn(2+)</name>
        <dbReference type="ChEBI" id="CHEBI:29105"/>
        <label>2</label>
        <note>catalytic</note>
    </ligand>
</feature>
<feature type="binding site" evidence="1">
    <location>
        <position position="239"/>
    </location>
    <ligand>
        <name>Zn(2+)</name>
        <dbReference type="ChEBI" id="CHEBI:29105"/>
        <label>2</label>
        <note>catalytic</note>
    </ligand>
</feature>
<name>RNZ_MYCSS</name>
<reference key="1">
    <citation type="submission" date="2006-06" db="EMBL/GenBank/DDBJ databases">
        <title>Complete sequence of chromosome of Mycobacterium sp. MCS.</title>
        <authorList>
            <consortium name="US DOE Joint Genome Institute"/>
            <person name="Copeland A."/>
            <person name="Lucas S."/>
            <person name="Lapidus A."/>
            <person name="Barry K."/>
            <person name="Detter J.C."/>
            <person name="Glavina del Rio T."/>
            <person name="Hammon N."/>
            <person name="Israni S."/>
            <person name="Dalin E."/>
            <person name="Tice H."/>
            <person name="Pitluck S."/>
            <person name="Martinez M."/>
            <person name="Schmutz J."/>
            <person name="Larimer F."/>
            <person name="Land M."/>
            <person name="Hauser L."/>
            <person name="Kyrpides N."/>
            <person name="Kim E."/>
            <person name="Miller C.D."/>
            <person name="Hughes J.E."/>
            <person name="Anderson A.J."/>
            <person name="Sims R.C."/>
            <person name="Richardson P."/>
        </authorList>
    </citation>
    <scope>NUCLEOTIDE SEQUENCE [LARGE SCALE GENOMIC DNA]</scope>
    <source>
        <strain>MCS</strain>
    </source>
</reference>
<organism>
    <name type="scientific">Mycobacterium sp. (strain MCS)</name>
    <dbReference type="NCBI Taxonomy" id="164756"/>
    <lineage>
        <taxon>Bacteria</taxon>
        <taxon>Bacillati</taxon>
        <taxon>Actinomycetota</taxon>
        <taxon>Actinomycetes</taxon>
        <taxon>Mycobacteriales</taxon>
        <taxon>Mycobacteriaceae</taxon>
        <taxon>Mycobacterium</taxon>
    </lineage>
</organism>
<keyword id="KW-0255">Endonuclease</keyword>
<keyword id="KW-0378">Hydrolase</keyword>
<keyword id="KW-0479">Metal-binding</keyword>
<keyword id="KW-0540">Nuclease</keyword>
<keyword id="KW-0819">tRNA processing</keyword>
<keyword id="KW-0862">Zinc</keyword>
<dbReference type="EC" id="3.1.26.11" evidence="1"/>
<dbReference type="EMBL" id="CP000384">
    <property type="protein sequence ID" value="ABG09613.1"/>
    <property type="molecule type" value="Genomic_DNA"/>
</dbReference>
<dbReference type="SMR" id="Q1B671"/>
<dbReference type="KEGG" id="mmc:Mmcs_3506"/>
<dbReference type="HOGENOM" id="CLU_031317_0_0_11"/>
<dbReference type="BioCyc" id="MSP164756:G1G6O-3576-MONOMER"/>
<dbReference type="GO" id="GO:0042781">
    <property type="term" value="F:3'-tRNA processing endoribonuclease activity"/>
    <property type="evidence" value="ECO:0007669"/>
    <property type="project" value="UniProtKB-UniRule"/>
</dbReference>
<dbReference type="GO" id="GO:0046872">
    <property type="term" value="F:metal ion binding"/>
    <property type="evidence" value="ECO:0007669"/>
    <property type="project" value="UniProtKB-KW"/>
</dbReference>
<dbReference type="CDD" id="cd07719">
    <property type="entry name" value="arylsulfatase_AtsA-like_MBL-fold"/>
    <property type="match status" value="1"/>
</dbReference>
<dbReference type="Gene3D" id="3.60.15.10">
    <property type="entry name" value="Ribonuclease Z/Hydroxyacylglutathione hydrolase-like"/>
    <property type="match status" value="1"/>
</dbReference>
<dbReference type="HAMAP" id="MF_01818">
    <property type="entry name" value="RNase_Z_BN"/>
    <property type="match status" value="1"/>
</dbReference>
<dbReference type="InterPro" id="IPR044094">
    <property type="entry name" value="AtsA-like_MBL-fold"/>
</dbReference>
<dbReference type="InterPro" id="IPR001279">
    <property type="entry name" value="Metallo-B-lactamas"/>
</dbReference>
<dbReference type="InterPro" id="IPR036866">
    <property type="entry name" value="RibonucZ/Hydroxyglut_hydro"/>
</dbReference>
<dbReference type="InterPro" id="IPR013471">
    <property type="entry name" value="RNase_Z/BN"/>
</dbReference>
<dbReference type="NCBIfam" id="NF000806">
    <property type="entry name" value="PRK00055.2-4"/>
    <property type="match status" value="1"/>
</dbReference>
<dbReference type="PANTHER" id="PTHR46018">
    <property type="entry name" value="ZINC PHOSPHODIESTERASE ELAC PROTEIN 1"/>
    <property type="match status" value="1"/>
</dbReference>
<dbReference type="PANTHER" id="PTHR46018:SF2">
    <property type="entry name" value="ZINC PHOSPHODIESTERASE ELAC PROTEIN 1"/>
    <property type="match status" value="1"/>
</dbReference>
<dbReference type="Pfam" id="PF12706">
    <property type="entry name" value="Lactamase_B_2"/>
    <property type="match status" value="1"/>
</dbReference>
<dbReference type="SMART" id="SM00849">
    <property type="entry name" value="Lactamase_B"/>
    <property type="match status" value="1"/>
</dbReference>
<dbReference type="SUPFAM" id="SSF56281">
    <property type="entry name" value="Metallo-hydrolase/oxidoreductase"/>
    <property type="match status" value="1"/>
</dbReference>
<accession>Q1B671</accession>
<comment type="function">
    <text evidence="1">Zinc phosphodiesterase, which displays some tRNA 3'-processing endonuclease activity. Probably involved in tRNA maturation, by removing a 3'-trailer from precursor tRNA.</text>
</comment>
<comment type="catalytic activity">
    <reaction evidence="1">
        <text>Endonucleolytic cleavage of RNA, removing extra 3' nucleotides from tRNA precursor, generating 3' termini of tRNAs. A 3'-hydroxy group is left at the tRNA terminus and a 5'-phosphoryl group is left at the trailer molecule.</text>
        <dbReference type="EC" id="3.1.26.11"/>
    </reaction>
</comment>
<comment type="cofactor">
    <cofactor evidence="1">
        <name>Zn(2+)</name>
        <dbReference type="ChEBI" id="CHEBI:29105"/>
    </cofactor>
    <text evidence="1">Binds 2 Zn(2+) ions.</text>
</comment>
<comment type="subunit">
    <text evidence="1">Homodimer.</text>
</comment>
<comment type="similarity">
    <text evidence="1">Belongs to the RNase Z family.</text>
</comment>
<evidence type="ECO:0000255" key="1">
    <source>
        <dbReference type="HAMAP-Rule" id="MF_01818"/>
    </source>
</evidence>
<sequence length="285" mass="29979">MIEVTLLGTGSPVPDARRAGPSTLVRAGGHAFLVDCGRGVQLRMAAAGIAANGLSALLLTHLHSDHIADLGDLLITRWVTTFTDQVPLQIIGPPGTAETVTAMLAAFGRDIGYRIAHHPDLTAPPPVEVHEVTEGVAWDHDGVTVRVAPTDHRPVAPTIGFRVEHADASVVLAGDTVPCATLDALAAGAGALVHTAIRKDLVELAPQQRVREVCEYHSSVEEAAETAERAGVGILVLTHYLPPIAPGQEADWRARAATAFPRQIELGDDLHRVEVHPGVCVKPAG</sequence>
<protein>
    <recommendedName>
        <fullName evidence="1">Ribonuclease Z</fullName>
        <shortName evidence="1">RNase Z</shortName>
        <ecNumber evidence="1">3.1.26.11</ecNumber>
    </recommendedName>
    <alternativeName>
        <fullName evidence="1">tRNA 3 endonuclease</fullName>
    </alternativeName>
    <alternativeName>
        <fullName evidence="1">tRNase Z</fullName>
    </alternativeName>
</protein>